<sequence length="177" mass="19950">MTESNILLTGKPGIGKTTVIKRTVELLSCSSTGFYTREIKRGDPRVGFEIISLQTGERLPLAHTDFTTAEDRVGKYGVKAENLLGFLKEINEAMTSNKPQCLVIDEIGKMEFFTPGFHETVDKAFQSSYPLLATIMKKSHKFCDYLKNRGDTDVIEVTENNRDDLPEKLAKRIEEQL</sequence>
<reference key="1">
    <citation type="submission" date="2008-04" db="EMBL/GenBank/DDBJ databases">
        <title>Complete sequence of chromosome of Natranaerobius thermophilus JW/NM-WN-LF.</title>
        <authorList>
            <consortium name="US DOE Joint Genome Institute"/>
            <person name="Copeland A."/>
            <person name="Lucas S."/>
            <person name="Lapidus A."/>
            <person name="Glavina del Rio T."/>
            <person name="Dalin E."/>
            <person name="Tice H."/>
            <person name="Bruce D."/>
            <person name="Goodwin L."/>
            <person name="Pitluck S."/>
            <person name="Chertkov O."/>
            <person name="Brettin T."/>
            <person name="Detter J.C."/>
            <person name="Han C."/>
            <person name="Kuske C.R."/>
            <person name="Schmutz J."/>
            <person name="Larimer F."/>
            <person name="Land M."/>
            <person name="Hauser L."/>
            <person name="Kyrpides N."/>
            <person name="Lykidis A."/>
            <person name="Mesbah N.M."/>
            <person name="Wiegel J."/>
        </authorList>
    </citation>
    <scope>NUCLEOTIDE SEQUENCE [LARGE SCALE GENOMIC DNA]</scope>
    <source>
        <strain>ATCC BAA-1301 / DSM 18059 / JW/NM-WN-LF</strain>
    </source>
</reference>
<keyword id="KW-0067">ATP-binding</keyword>
<keyword id="KW-0378">Hydrolase</keyword>
<keyword id="KW-0547">Nucleotide-binding</keyword>
<keyword id="KW-1185">Reference proteome</keyword>
<gene>
    <name type="ordered locus">Nther_0640</name>
</gene>
<name>NTPTH_NATTJ</name>
<organism>
    <name type="scientific">Natranaerobius thermophilus (strain ATCC BAA-1301 / DSM 18059 / JW/NM-WN-LF)</name>
    <dbReference type="NCBI Taxonomy" id="457570"/>
    <lineage>
        <taxon>Bacteria</taxon>
        <taxon>Bacillati</taxon>
        <taxon>Bacillota</taxon>
        <taxon>Clostridia</taxon>
        <taxon>Natranaerobiales</taxon>
        <taxon>Natranaerobiaceae</taxon>
        <taxon>Natranaerobius</taxon>
    </lineage>
</organism>
<proteinExistence type="inferred from homology"/>
<evidence type="ECO:0000255" key="1">
    <source>
        <dbReference type="HAMAP-Rule" id="MF_00796"/>
    </source>
</evidence>
<comment type="function">
    <text evidence="1">Has nucleotide phosphatase activity towards ATP, GTP, CTP, TTP and UTP. May hydrolyze nucleoside diphosphates with lower efficiency.</text>
</comment>
<comment type="catalytic activity">
    <reaction evidence="1">
        <text>a ribonucleoside 5'-triphosphate + H2O = a ribonucleoside 5'-diphosphate + phosphate + H(+)</text>
        <dbReference type="Rhea" id="RHEA:23680"/>
        <dbReference type="ChEBI" id="CHEBI:15377"/>
        <dbReference type="ChEBI" id="CHEBI:15378"/>
        <dbReference type="ChEBI" id="CHEBI:43474"/>
        <dbReference type="ChEBI" id="CHEBI:57930"/>
        <dbReference type="ChEBI" id="CHEBI:61557"/>
        <dbReference type="EC" id="3.6.1.15"/>
    </reaction>
</comment>
<comment type="similarity">
    <text evidence="1">Belongs to the THEP1 NTPase family.</text>
</comment>
<accession>B2A6V4</accession>
<protein>
    <recommendedName>
        <fullName evidence="1">Nucleoside-triphosphatase THEP1</fullName>
        <shortName evidence="1">NTPase THEP1</shortName>
        <ecNumber evidence="1">3.6.1.15</ecNumber>
    </recommendedName>
    <alternativeName>
        <fullName evidence="1">Nucleoside triphosphate phosphohydrolase</fullName>
    </alternativeName>
</protein>
<dbReference type="EC" id="3.6.1.15" evidence="1"/>
<dbReference type="EMBL" id="CP001034">
    <property type="protein sequence ID" value="ACB84235.1"/>
    <property type="molecule type" value="Genomic_DNA"/>
</dbReference>
<dbReference type="RefSeq" id="WP_012447119.1">
    <property type="nucleotide sequence ID" value="NC_010718.1"/>
</dbReference>
<dbReference type="SMR" id="B2A6V4"/>
<dbReference type="STRING" id="457570.Nther_0640"/>
<dbReference type="KEGG" id="nth:Nther_0640"/>
<dbReference type="eggNOG" id="COG1618">
    <property type="taxonomic scope" value="Bacteria"/>
</dbReference>
<dbReference type="HOGENOM" id="CLU_103145_1_1_9"/>
<dbReference type="InParanoid" id="B2A6V4"/>
<dbReference type="OrthoDB" id="9786803at2"/>
<dbReference type="Proteomes" id="UP000001683">
    <property type="component" value="Chromosome"/>
</dbReference>
<dbReference type="GO" id="GO:0005524">
    <property type="term" value="F:ATP binding"/>
    <property type="evidence" value="ECO:0007669"/>
    <property type="project" value="UniProtKB-UniRule"/>
</dbReference>
<dbReference type="GO" id="GO:0017111">
    <property type="term" value="F:ribonucleoside triphosphate phosphatase activity"/>
    <property type="evidence" value="ECO:0007669"/>
    <property type="project" value="UniProtKB-UniRule"/>
</dbReference>
<dbReference type="CDD" id="cd19482">
    <property type="entry name" value="RecA-like_Thep1"/>
    <property type="match status" value="1"/>
</dbReference>
<dbReference type="Gene3D" id="3.40.50.300">
    <property type="entry name" value="P-loop containing nucleotide triphosphate hydrolases"/>
    <property type="match status" value="1"/>
</dbReference>
<dbReference type="HAMAP" id="MF_00796">
    <property type="entry name" value="NTPase_1"/>
    <property type="match status" value="1"/>
</dbReference>
<dbReference type="InterPro" id="IPR004948">
    <property type="entry name" value="Nuc-triphosphatase_THEP1"/>
</dbReference>
<dbReference type="InterPro" id="IPR027417">
    <property type="entry name" value="P-loop_NTPase"/>
</dbReference>
<dbReference type="NCBIfam" id="NF010248">
    <property type="entry name" value="PRK13695.1"/>
    <property type="match status" value="1"/>
</dbReference>
<dbReference type="PANTHER" id="PTHR43146">
    <property type="entry name" value="CANCER-RELATED NUCLEOSIDE-TRIPHOSPHATASE"/>
    <property type="match status" value="1"/>
</dbReference>
<dbReference type="PANTHER" id="PTHR43146:SF1">
    <property type="entry name" value="CANCER-RELATED NUCLEOSIDE-TRIPHOSPHATASE"/>
    <property type="match status" value="1"/>
</dbReference>
<dbReference type="Pfam" id="PF03266">
    <property type="entry name" value="NTPase_1"/>
    <property type="match status" value="1"/>
</dbReference>
<dbReference type="SUPFAM" id="SSF52540">
    <property type="entry name" value="P-loop containing nucleoside triphosphate hydrolases"/>
    <property type="match status" value="1"/>
</dbReference>
<feature type="chain" id="PRO_0000360018" description="Nucleoside-triphosphatase THEP1">
    <location>
        <begin position="1"/>
        <end position="177"/>
    </location>
</feature>
<feature type="binding site" evidence="1">
    <location>
        <begin position="10"/>
        <end position="17"/>
    </location>
    <ligand>
        <name>ATP</name>
        <dbReference type="ChEBI" id="CHEBI:30616"/>
    </ligand>
</feature>
<feature type="binding site" evidence="1">
    <location>
        <begin position="101"/>
        <end position="108"/>
    </location>
    <ligand>
        <name>ATP</name>
        <dbReference type="ChEBI" id="CHEBI:30616"/>
    </ligand>
</feature>